<feature type="chain" id="PRO_1000012660" description="ATP-dependent protease subunit HslV">
    <location>
        <begin position="1"/>
        <end position="182"/>
    </location>
</feature>
<feature type="active site" evidence="1">
    <location>
        <position position="10"/>
    </location>
</feature>
<feature type="binding site" evidence="1">
    <location>
        <position position="166"/>
    </location>
    <ligand>
        <name>Na(+)</name>
        <dbReference type="ChEBI" id="CHEBI:29101"/>
    </ligand>
</feature>
<feature type="binding site" evidence="1">
    <location>
        <position position="169"/>
    </location>
    <ligand>
        <name>Na(+)</name>
        <dbReference type="ChEBI" id="CHEBI:29101"/>
    </ligand>
</feature>
<feature type="binding site" evidence="1">
    <location>
        <position position="172"/>
    </location>
    <ligand>
        <name>Na(+)</name>
        <dbReference type="ChEBI" id="CHEBI:29101"/>
    </ligand>
</feature>
<comment type="function">
    <text evidence="1">Protease subunit of a proteasome-like degradation complex believed to be a general protein degrading machinery.</text>
</comment>
<comment type="catalytic activity">
    <reaction evidence="1">
        <text>ATP-dependent cleavage of peptide bonds with broad specificity.</text>
        <dbReference type="EC" id="3.4.25.2"/>
    </reaction>
</comment>
<comment type="activity regulation">
    <text evidence="1">Allosterically activated by HslU binding.</text>
</comment>
<comment type="subunit">
    <text evidence="1">A double ring-shaped homohexamer of HslV is capped on each side by a ring-shaped HslU homohexamer. The assembly of the HslU/HslV complex is dependent on binding of ATP.</text>
</comment>
<comment type="subcellular location">
    <subcellularLocation>
        <location evidence="1">Cytoplasm</location>
    </subcellularLocation>
</comment>
<comment type="similarity">
    <text evidence="1">Belongs to the peptidase T1B family. HslV subfamily.</text>
</comment>
<name>HSLV_RICRS</name>
<accession>A8GRL7</accession>
<dbReference type="EC" id="3.4.25.2" evidence="1"/>
<dbReference type="EMBL" id="CP000848">
    <property type="protein sequence ID" value="ABV76042.1"/>
    <property type="molecule type" value="Genomic_DNA"/>
</dbReference>
<dbReference type="RefSeq" id="WP_004996101.1">
    <property type="nucleotide sequence ID" value="NC_009882.1"/>
</dbReference>
<dbReference type="SMR" id="A8GRL7"/>
<dbReference type="GeneID" id="79937200"/>
<dbReference type="GeneID" id="95362094"/>
<dbReference type="KEGG" id="rri:A1G_02455"/>
<dbReference type="HOGENOM" id="CLU_093872_1_0_5"/>
<dbReference type="Proteomes" id="UP000006832">
    <property type="component" value="Chromosome"/>
</dbReference>
<dbReference type="GO" id="GO:0009376">
    <property type="term" value="C:HslUV protease complex"/>
    <property type="evidence" value="ECO:0007669"/>
    <property type="project" value="UniProtKB-UniRule"/>
</dbReference>
<dbReference type="GO" id="GO:0005839">
    <property type="term" value="C:proteasome core complex"/>
    <property type="evidence" value="ECO:0007669"/>
    <property type="project" value="InterPro"/>
</dbReference>
<dbReference type="GO" id="GO:0046872">
    <property type="term" value="F:metal ion binding"/>
    <property type="evidence" value="ECO:0007669"/>
    <property type="project" value="UniProtKB-KW"/>
</dbReference>
<dbReference type="GO" id="GO:0004298">
    <property type="term" value="F:threonine-type endopeptidase activity"/>
    <property type="evidence" value="ECO:0007669"/>
    <property type="project" value="UniProtKB-KW"/>
</dbReference>
<dbReference type="GO" id="GO:0051603">
    <property type="term" value="P:proteolysis involved in protein catabolic process"/>
    <property type="evidence" value="ECO:0007669"/>
    <property type="project" value="InterPro"/>
</dbReference>
<dbReference type="CDD" id="cd01913">
    <property type="entry name" value="protease_HslV"/>
    <property type="match status" value="1"/>
</dbReference>
<dbReference type="Gene3D" id="3.60.20.10">
    <property type="entry name" value="Glutamine Phosphoribosylpyrophosphate, subunit 1, domain 1"/>
    <property type="match status" value="1"/>
</dbReference>
<dbReference type="HAMAP" id="MF_00248">
    <property type="entry name" value="HslV"/>
    <property type="match status" value="1"/>
</dbReference>
<dbReference type="InterPro" id="IPR022281">
    <property type="entry name" value="ATP-dep_Prtase_HsIV_su"/>
</dbReference>
<dbReference type="InterPro" id="IPR029055">
    <property type="entry name" value="Ntn_hydrolases_N"/>
</dbReference>
<dbReference type="InterPro" id="IPR001353">
    <property type="entry name" value="Proteasome_sua/b"/>
</dbReference>
<dbReference type="InterPro" id="IPR023333">
    <property type="entry name" value="Proteasome_suB-type"/>
</dbReference>
<dbReference type="NCBIfam" id="TIGR03692">
    <property type="entry name" value="ATP_dep_HslV"/>
    <property type="match status" value="1"/>
</dbReference>
<dbReference type="NCBIfam" id="NF003964">
    <property type="entry name" value="PRK05456.1"/>
    <property type="match status" value="1"/>
</dbReference>
<dbReference type="PANTHER" id="PTHR32194:SF0">
    <property type="entry name" value="ATP-DEPENDENT PROTEASE SUBUNIT HSLV"/>
    <property type="match status" value="1"/>
</dbReference>
<dbReference type="PANTHER" id="PTHR32194">
    <property type="entry name" value="METALLOPROTEASE TLDD"/>
    <property type="match status" value="1"/>
</dbReference>
<dbReference type="Pfam" id="PF00227">
    <property type="entry name" value="Proteasome"/>
    <property type="match status" value="1"/>
</dbReference>
<dbReference type="PIRSF" id="PIRSF039093">
    <property type="entry name" value="HslV"/>
    <property type="match status" value="1"/>
</dbReference>
<dbReference type="SUPFAM" id="SSF56235">
    <property type="entry name" value="N-terminal nucleophile aminohydrolases (Ntn hydrolases)"/>
    <property type="match status" value="1"/>
</dbReference>
<dbReference type="PROSITE" id="PS51476">
    <property type="entry name" value="PROTEASOME_BETA_2"/>
    <property type="match status" value="1"/>
</dbReference>
<sequence length="182" mass="19738">MSDNLSLHGTTILCLKKNEEIIIAADGQVSHGNTVLKSTARKLRTIANNKIIAGFAGSTADGLALFEKLAVKIEQHKHNLLRSAVELAKDWRSDKYLRRLEAMMIVADRSHILILTGNGDVVEPENNVAAIGSGGLFALSAARALMSYENNLTAEEIALKSMNIAADLCVFSNHNIIMEKVV</sequence>
<gene>
    <name evidence="1" type="primary">hslV</name>
    <name type="ordered locus">A1G_02455</name>
</gene>
<proteinExistence type="inferred from homology"/>
<evidence type="ECO:0000255" key="1">
    <source>
        <dbReference type="HAMAP-Rule" id="MF_00248"/>
    </source>
</evidence>
<keyword id="KW-0021">Allosteric enzyme</keyword>
<keyword id="KW-0963">Cytoplasm</keyword>
<keyword id="KW-0378">Hydrolase</keyword>
<keyword id="KW-0479">Metal-binding</keyword>
<keyword id="KW-0645">Protease</keyword>
<keyword id="KW-0915">Sodium</keyword>
<keyword id="KW-0888">Threonine protease</keyword>
<protein>
    <recommendedName>
        <fullName evidence="1">ATP-dependent protease subunit HslV</fullName>
        <ecNumber evidence="1">3.4.25.2</ecNumber>
    </recommendedName>
</protein>
<organism>
    <name type="scientific">Rickettsia rickettsii (strain Sheila Smith)</name>
    <dbReference type="NCBI Taxonomy" id="392021"/>
    <lineage>
        <taxon>Bacteria</taxon>
        <taxon>Pseudomonadati</taxon>
        <taxon>Pseudomonadota</taxon>
        <taxon>Alphaproteobacteria</taxon>
        <taxon>Rickettsiales</taxon>
        <taxon>Rickettsiaceae</taxon>
        <taxon>Rickettsieae</taxon>
        <taxon>Rickettsia</taxon>
        <taxon>spotted fever group</taxon>
    </lineage>
</organism>
<reference key="1">
    <citation type="submission" date="2007-09" db="EMBL/GenBank/DDBJ databases">
        <title>Complete genome sequence of Rickettsia rickettsii.</title>
        <authorList>
            <person name="Madan A."/>
            <person name="Fahey J."/>
            <person name="Helton E."/>
            <person name="Ketteman M."/>
            <person name="Madan A."/>
            <person name="Rodrigues S."/>
            <person name="Sanchez A."/>
            <person name="Dasch G."/>
            <person name="Eremeeva M."/>
        </authorList>
    </citation>
    <scope>NUCLEOTIDE SEQUENCE [LARGE SCALE GENOMIC DNA]</scope>
    <source>
        <strain>Sheila Smith</strain>
    </source>
</reference>